<name>YRAN_SHIFL</name>
<gene>
    <name evidence="1" type="primary">yraN</name>
    <name type="ordered locus">SF3189</name>
    <name type="ordered locus">S3406</name>
</gene>
<reference key="1">
    <citation type="journal article" date="2002" name="Nucleic Acids Res.">
        <title>Genome sequence of Shigella flexneri 2a: insights into pathogenicity through comparison with genomes of Escherichia coli K12 and O157.</title>
        <authorList>
            <person name="Jin Q."/>
            <person name="Yuan Z."/>
            <person name="Xu J."/>
            <person name="Wang Y."/>
            <person name="Shen Y."/>
            <person name="Lu W."/>
            <person name="Wang J."/>
            <person name="Liu H."/>
            <person name="Yang J."/>
            <person name="Yang F."/>
            <person name="Zhang X."/>
            <person name="Zhang J."/>
            <person name="Yang G."/>
            <person name="Wu H."/>
            <person name="Qu D."/>
            <person name="Dong J."/>
            <person name="Sun L."/>
            <person name="Xue Y."/>
            <person name="Zhao A."/>
            <person name="Gao Y."/>
            <person name="Zhu J."/>
            <person name="Kan B."/>
            <person name="Ding K."/>
            <person name="Chen S."/>
            <person name="Cheng H."/>
            <person name="Yao Z."/>
            <person name="He B."/>
            <person name="Chen R."/>
            <person name="Ma D."/>
            <person name="Qiang B."/>
            <person name="Wen Y."/>
            <person name="Hou Y."/>
            <person name="Yu J."/>
        </authorList>
    </citation>
    <scope>NUCLEOTIDE SEQUENCE [LARGE SCALE GENOMIC DNA]</scope>
    <source>
        <strain>301 / Serotype 2a</strain>
    </source>
</reference>
<reference key="2">
    <citation type="journal article" date="2003" name="Infect. Immun.">
        <title>Complete genome sequence and comparative genomics of Shigella flexneri serotype 2a strain 2457T.</title>
        <authorList>
            <person name="Wei J."/>
            <person name="Goldberg M.B."/>
            <person name="Burland V."/>
            <person name="Venkatesan M.M."/>
            <person name="Deng W."/>
            <person name="Fournier G."/>
            <person name="Mayhew G.F."/>
            <person name="Plunkett G. III"/>
            <person name="Rose D.J."/>
            <person name="Darling A."/>
            <person name="Mau B."/>
            <person name="Perna N.T."/>
            <person name="Payne S.M."/>
            <person name="Runyen-Janecky L.J."/>
            <person name="Zhou S."/>
            <person name="Schwartz D.C."/>
            <person name="Blattner F.R."/>
        </authorList>
    </citation>
    <scope>NUCLEOTIDE SEQUENCE [LARGE SCALE GENOMIC DNA]</scope>
    <source>
        <strain>ATCC 700930 / 2457T / Serotype 2a</strain>
    </source>
</reference>
<proteinExistence type="inferred from homology"/>
<evidence type="ECO:0000255" key="1">
    <source>
        <dbReference type="HAMAP-Rule" id="MF_00048"/>
    </source>
</evidence>
<evidence type="ECO:0000256" key="2">
    <source>
        <dbReference type="SAM" id="MobiDB-lite"/>
    </source>
</evidence>
<keyword id="KW-1185">Reference proteome</keyword>
<protein>
    <recommendedName>
        <fullName evidence="1">UPF0102 protein YraN</fullName>
    </recommendedName>
</protein>
<feature type="chain" id="PRO_1000009268" description="UPF0102 protein YraN">
    <location>
        <begin position="1"/>
        <end position="131"/>
    </location>
</feature>
<feature type="region of interest" description="Disordered" evidence="2">
    <location>
        <begin position="1"/>
        <end position="21"/>
    </location>
</feature>
<feature type="compositionally biased region" description="Polar residues" evidence="2">
    <location>
        <begin position="1"/>
        <end position="19"/>
    </location>
</feature>
<comment type="similarity">
    <text evidence="1">Belongs to the UPF0102 family.</text>
</comment>
<organism>
    <name type="scientific">Shigella flexneri</name>
    <dbReference type="NCBI Taxonomy" id="623"/>
    <lineage>
        <taxon>Bacteria</taxon>
        <taxon>Pseudomonadati</taxon>
        <taxon>Pseudomonadota</taxon>
        <taxon>Gammaproteobacteria</taxon>
        <taxon>Enterobacterales</taxon>
        <taxon>Enterobacteriaceae</taxon>
        <taxon>Shigella</taxon>
    </lineage>
</organism>
<sequence length="131" mass="14741">MATVPTRSGSPRQLTTKQTGDAWEAQARRWLEGKGLRFIAANVNERGGEIDLIMREGLTTVFVEVRYRRSALYGGAAASVTRSKQHKLLQTARLWLARHNGSFDTVDCRFDVVAFTGNEVEWIKDAFNDHS</sequence>
<accession>Q83JG9</accession>
<accession>Q7BZR4</accession>
<dbReference type="EMBL" id="AE005674">
    <property type="protein sequence ID" value="AAN44656.1"/>
    <property type="molecule type" value="Genomic_DNA"/>
</dbReference>
<dbReference type="EMBL" id="AE014073">
    <property type="protein sequence ID" value="AAP18470.1"/>
    <property type="molecule type" value="Genomic_DNA"/>
</dbReference>
<dbReference type="RefSeq" id="NP_708949.1">
    <property type="nucleotide sequence ID" value="NC_004337.2"/>
</dbReference>
<dbReference type="RefSeq" id="WP_000246827.1">
    <property type="nucleotide sequence ID" value="NZ_WPGW01000004.1"/>
</dbReference>
<dbReference type="SMR" id="Q83JG9"/>
<dbReference type="STRING" id="198214.SF3189"/>
<dbReference type="PaxDb" id="198214-SF3189"/>
<dbReference type="GeneID" id="1027125"/>
<dbReference type="KEGG" id="sfl:SF3189"/>
<dbReference type="KEGG" id="sfx:S3406"/>
<dbReference type="PATRIC" id="fig|198214.7.peg.3788"/>
<dbReference type="HOGENOM" id="CLU_115353_1_0_6"/>
<dbReference type="Proteomes" id="UP000001006">
    <property type="component" value="Chromosome"/>
</dbReference>
<dbReference type="Proteomes" id="UP000002673">
    <property type="component" value="Chromosome"/>
</dbReference>
<dbReference type="GO" id="GO:0003676">
    <property type="term" value="F:nucleic acid binding"/>
    <property type="evidence" value="ECO:0007669"/>
    <property type="project" value="InterPro"/>
</dbReference>
<dbReference type="CDD" id="cd20736">
    <property type="entry name" value="PoNe_Nuclease"/>
    <property type="match status" value="1"/>
</dbReference>
<dbReference type="Gene3D" id="3.40.1350.10">
    <property type="match status" value="1"/>
</dbReference>
<dbReference type="HAMAP" id="MF_00048">
    <property type="entry name" value="UPF0102"/>
    <property type="match status" value="1"/>
</dbReference>
<dbReference type="InterPro" id="IPR011335">
    <property type="entry name" value="Restrct_endonuc-II-like"/>
</dbReference>
<dbReference type="InterPro" id="IPR011856">
    <property type="entry name" value="tRNA_endonuc-like_dom_sf"/>
</dbReference>
<dbReference type="InterPro" id="IPR003509">
    <property type="entry name" value="UPF0102_YraN-like"/>
</dbReference>
<dbReference type="NCBIfam" id="NF009150">
    <property type="entry name" value="PRK12497.1-3"/>
    <property type="match status" value="1"/>
</dbReference>
<dbReference type="NCBIfam" id="TIGR00252">
    <property type="entry name" value="YraN family protein"/>
    <property type="match status" value="1"/>
</dbReference>
<dbReference type="PANTHER" id="PTHR34039">
    <property type="entry name" value="UPF0102 PROTEIN YRAN"/>
    <property type="match status" value="1"/>
</dbReference>
<dbReference type="PANTHER" id="PTHR34039:SF1">
    <property type="entry name" value="UPF0102 PROTEIN YRAN"/>
    <property type="match status" value="1"/>
</dbReference>
<dbReference type="Pfam" id="PF02021">
    <property type="entry name" value="UPF0102"/>
    <property type="match status" value="1"/>
</dbReference>
<dbReference type="SUPFAM" id="SSF52980">
    <property type="entry name" value="Restriction endonuclease-like"/>
    <property type="match status" value="1"/>
</dbReference>